<proteinExistence type="inferred from homology"/>
<gene>
    <name evidence="1" type="primary">rev</name>
</gene>
<sequence length="124" mass="13702">MAGRSEPQDDARLLQAVKIIKILYQSNPYPSPEGTRKARRNRRRRWRARQKQISEISGRVLATYLGRPPKPGDLELPELDKLSLQCVETTQDVGTSNTSQPQTATGETVPAGGNYSILGKGAKN</sequence>
<evidence type="ECO:0000255" key="1">
    <source>
        <dbReference type="HAMAP-Rule" id="MF_04077"/>
    </source>
</evidence>
<evidence type="ECO:0000256" key="2">
    <source>
        <dbReference type="SAM" id="MobiDB-lite"/>
    </source>
</evidence>
<reference key="1">
    <citation type="journal article" date="1990" name="Nature">
        <title>Genetic organization of a chimpanzee lentivirus related to HIV-1.</title>
        <authorList>
            <person name="Huet T."/>
            <person name="Cheynier R."/>
            <person name="Meyerhans A."/>
            <person name="Roelants G."/>
            <person name="Wain-Hobson S."/>
        </authorList>
    </citation>
    <scope>NUCLEOTIDE SEQUENCE [GENOMIC RNA]</scope>
</reference>
<protein>
    <recommendedName>
        <fullName evidence="1">Protein Rev</fullName>
    </recommendedName>
    <alternativeName>
        <fullName evidence="1">ART/TRS</fullName>
    </alternativeName>
    <alternativeName>
        <fullName evidence="1">Anti-repression transactivator</fullName>
    </alternativeName>
    <alternativeName>
        <fullName evidence="1">Regulator of expression of viral proteins</fullName>
    </alternativeName>
</protein>
<feature type="chain" id="PRO_0000085303" description="Protein Rev">
    <location>
        <begin position="1"/>
        <end position="124"/>
    </location>
</feature>
<feature type="region of interest" description="Homomultimerization" evidence="1">
    <location>
        <begin position="19"/>
        <end position="27"/>
    </location>
</feature>
<feature type="region of interest" description="Disordered" evidence="2">
    <location>
        <begin position="25"/>
        <end position="51"/>
    </location>
</feature>
<feature type="region of interest" description="Disordered" evidence="2">
    <location>
        <begin position="90"/>
        <end position="124"/>
    </location>
</feature>
<feature type="short sequence motif" description="Nuclear localization signal and RNA-binding (RRE)" evidence="1">
    <location>
        <begin position="35"/>
        <end position="51"/>
    </location>
</feature>
<feature type="short sequence motif" description="Nuclear export signal and binding to XPO1" evidence="1">
    <location>
        <begin position="74"/>
        <end position="85"/>
    </location>
</feature>
<feature type="compositionally biased region" description="Basic residues" evidence="2">
    <location>
        <begin position="37"/>
        <end position="50"/>
    </location>
</feature>
<feature type="compositionally biased region" description="Polar residues" evidence="2">
    <location>
        <begin position="90"/>
        <end position="106"/>
    </location>
</feature>
<feature type="modified residue" description="Phosphoserine; by host CK2" evidence="1">
    <location>
        <position position="5"/>
    </location>
</feature>
<organismHost>
    <name type="scientific">Pan</name>
    <name type="common">chimpanzees</name>
    <dbReference type="NCBI Taxonomy" id="9596"/>
</organismHost>
<accession>P17280</accession>
<organism>
    <name type="scientific">Simian immunodeficiency virus (isolate CPZ GAB1)</name>
    <name type="common">SIV-cpz</name>
    <name type="synonym">Chimpanzee immunodeficiency virus</name>
    <dbReference type="NCBI Taxonomy" id="402771"/>
    <lineage>
        <taxon>Viruses</taxon>
        <taxon>Riboviria</taxon>
        <taxon>Pararnavirae</taxon>
        <taxon>Artverviricota</taxon>
        <taxon>Revtraviricetes</taxon>
        <taxon>Ortervirales</taxon>
        <taxon>Retroviridae</taxon>
        <taxon>Orthoretrovirinae</taxon>
        <taxon>Lentivirus</taxon>
        <taxon>Simian immunodeficiency virus</taxon>
    </lineage>
</organism>
<dbReference type="EMBL" id="X52154">
    <property type="protein sequence ID" value="CAA36405.1"/>
    <property type="molecule type" value="Genomic_RNA"/>
</dbReference>
<dbReference type="PIR" id="S09988">
    <property type="entry name" value="VKLJSI"/>
</dbReference>
<dbReference type="Proteomes" id="UP000009153">
    <property type="component" value="Segment"/>
</dbReference>
<dbReference type="GO" id="GO:0030430">
    <property type="term" value="C:host cell cytoplasm"/>
    <property type="evidence" value="ECO:0007669"/>
    <property type="project" value="UniProtKB-SubCell"/>
</dbReference>
<dbReference type="GO" id="GO:0044196">
    <property type="term" value="C:host cell nucleolus"/>
    <property type="evidence" value="ECO:0007669"/>
    <property type="project" value="UniProtKB-SubCell"/>
</dbReference>
<dbReference type="GO" id="GO:0003700">
    <property type="term" value="F:DNA-binding transcription factor activity"/>
    <property type="evidence" value="ECO:0007669"/>
    <property type="project" value="UniProtKB-UniRule"/>
</dbReference>
<dbReference type="GO" id="GO:0003723">
    <property type="term" value="F:RNA binding"/>
    <property type="evidence" value="ECO:0007669"/>
    <property type="project" value="UniProtKB-UniRule"/>
</dbReference>
<dbReference type="GO" id="GO:0051028">
    <property type="term" value="P:mRNA transport"/>
    <property type="evidence" value="ECO:0007669"/>
    <property type="project" value="UniProtKB-UniRule"/>
</dbReference>
<dbReference type="GO" id="GO:0016032">
    <property type="term" value="P:viral process"/>
    <property type="evidence" value="ECO:0007669"/>
    <property type="project" value="UniProtKB-UniRule"/>
</dbReference>
<dbReference type="Gene3D" id="6.10.140.630">
    <property type="match status" value="1"/>
</dbReference>
<dbReference type="HAMAP" id="MF_04077">
    <property type="entry name" value="REV_HIV1"/>
    <property type="match status" value="1"/>
</dbReference>
<dbReference type="InterPro" id="IPR000625">
    <property type="entry name" value="REV_protein"/>
</dbReference>
<dbReference type="Pfam" id="PF00424">
    <property type="entry name" value="REV"/>
    <property type="match status" value="1"/>
</dbReference>
<keyword id="KW-0014">AIDS</keyword>
<keyword id="KW-1035">Host cytoplasm</keyword>
<keyword id="KW-1048">Host nucleus</keyword>
<keyword id="KW-0945">Host-virus interaction</keyword>
<keyword id="KW-0488">Methylation</keyword>
<keyword id="KW-0509">mRNA transport</keyword>
<keyword id="KW-0597">Phosphoprotein</keyword>
<keyword id="KW-1185">Reference proteome</keyword>
<keyword id="KW-0694">RNA-binding</keyword>
<keyword id="KW-0813">Transport</keyword>
<comment type="function">
    <text evidence="1">Escorts unspliced or incompletely spliced viral pre-mRNAs (late transcripts) out of the nucleus of infected cells. These pre-mRNAs carry a recognition sequence called Rev responsive element (RRE) located in the env gene, that is not present in fully spliced viral mRNAs (early transcripts). This function is essential since most viral proteins are translated from unspliced or partially spliced pre-mRNAs which cannot exit the nucleus by the pathway used by fully processed cellular mRNAs. Rev itself is translated from a fully spliced mRNA that readily exits the nucleus. Rev's nuclear localization signal (NLS) binds directly to KPNB1/Importin beta-1 without previous binding to KPNA1/Importin alpha-1. KPNB1 binds to the GDP bound form of RAN (Ran-GDP) and targets Rev to the nucleus. In the nucleus, the conversion from Ran-GDP to Ran-GTP dissociates Rev from KPNB1 and allows Rev's binding to the RRE in viral pre-mRNAs. Rev multimerization on the RRE via cooperative assembly exposes its nuclear export signal (NES) to the surface. Rev can then form a complex with XPO1/CRM1 and Ran-GTP, leading to nuclear export of the complex. Conversion from Ran-GTP to Ran-GDP mediates dissociation of the Rev/RRE/XPO1/RAN complex, so that Rev can return to the nucleus for a subsequent round of export. Beside KPNB1, also seems to interact with TNPO1/Transportin-1, RANBP5/IPO5 and IPO7/RANBP7 for nuclear import. The nucleoporin-like HRB/RIP is an essential cofactor that probably indirectly interacts with Rev to release HIV RNAs from the perinuclear region to the cytoplasm.</text>
</comment>
<comment type="subunit">
    <text evidence="1">Homomultimer; when bound to the RRE. Multimeric assembly is essential for activity and may involve XPO1. Binds to human KPNB1, XPO1, TNPO1, RANBP5 and IPO7. Interacts with the viral Integrase. Interacts with human KHDRBS1. Interacts with human NAP1; this interaction decreases Rev multimerization and stimulates its activity. Interacts with human DEAD-box helicases DDX3 and DDX24; these interactions may serve for viral RNA export to the cytoplasm and packaging, respectively. Interacts with human PSIP1; this interaction may inhibit HIV-1 DNA integration by promoting dissociation of the Integrase-LEDGF/p75 complex.</text>
</comment>
<comment type="subcellular location">
    <subcellularLocation>
        <location evidence="1">Host nucleus</location>
        <location evidence="1">Host nucleolus</location>
    </subcellularLocation>
    <subcellularLocation>
        <location evidence="1">Host cytoplasm</location>
    </subcellularLocation>
    <text evidence="1">The presence of both nuclear import and nuclear export signals leads to continuous shuttling between the nucleus and cytoplasm.</text>
</comment>
<comment type="domain">
    <text evidence="1">The RNA-binding motif binds to the RRE, a 240 bp stem-and-loop structure present in incompletely spliced viral pre-mRNAs. This region also contains the NLS which mediates nuclear localization via KPNB1 binding and, when the N-terminal sequence is present, nucleolar targeting. These overlapping functions prevent Rev bound to RRE from undesirable return to the nucleus. When Rev binds the RRE, the NLS becomes masked while the NES remains accessible. The leucine-rich NES mediates binding to human XPO1.</text>
</comment>
<comment type="PTM">
    <text evidence="1">Asymmetrically arginine dimethylated at one site by host PRMT6. Methylation impairs the RNA-binding activity and export of viral RNA from the nucleus to the cytoplasm.</text>
</comment>
<comment type="PTM">
    <text evidence="1">Phosphorylated by protein kinase CK2. Presence of, and maybe binding to the N-terminus of the regulatory beta subunit of CK2 is necessary for CK2-mediated Rev's phosphorylation.</text>
</comment>
<comment type="miscellaneous">
    <text evidence="1">HIV-1 lineages are divided in three main groups, M (for Major), O (for Outlier), and N (for New, or Non-M, Non-O). The vast majority of strains found worldwide belong to the group M. Group O seems to be endemic to and largely confined to Cameroon and neighboring countries in West Central Africa, where these viruses represent a small minority of HIV-1 strains. The group N is represented by a limited number of isolates from Cameroonian persons. The group M is further subdivided in 9 clades or subtypes (A to D, F to H, J and K).</text>
</comment>
<comment type="similarity">
    <text evidence="1">Belongs to the HIV-1 REV protein family.</text>
</comment>
<name>REV_SIVCZ</name>